<gene>
    <name evidence="1" type="primary">btuC</name>
    <name type="ordered locus">SeSA_A1435</name>
</gene>
<proteinExistence type="inferred from homology"/>
<evidence type="ECO:0000255" key="1">
    <source>
        <dbReference type="HAMAP-Rule" id="MF_01004"/>
    </source>
</evidence>
<reference key="1">
    <citation type="journal article" date="2011" name="J. Bacteriol.">
        <title>Comparative genomics of 28 Salmonella enterica isolates: evidence for CRISPR-mediated adaptive sublineage evolution.</title>
        <authorList>
            <person name="Fricke W.F."/>
            <person name="Mammel M.K."/>
            <person name="McDermott P.F."/>
            <person name="Tartera C."/>
            <person name="White D.G."/>
            <person name="Leclerc J.E."/>
            <person name="Ravel J."/>
            <person name="Cebula T.A."/>
        </authorList>
    </citation>
    <scope>NUCLEOTIDE SEQUENCE [LARGE SCALE GENOMIC DNA]</scope>
    <source>
        <strain>CVM19633</strain>
    </source>
</reference>
<protein>
    <recommendedName>
        <fullName evidence="1">Vitamin B12 import system permease protein BtuC</fullName>
    </recommendedName>
</protein>
<keyword id="KW-0997">Cell inner membrane</keyword>
<keyword id="KW-1003">Cell membrane</keyword>
<keyword id="KW-0472">Membrane</keyword>
<keyword id="KW-0812">Transmembrane</keyword>
<keyword id="KW-1133">Transmembrane helix</keyword>
<keyword id="KW-0813">Transport</keyword>
<comment type="function">
    <text evidence="1">Part of the ABC transporter complex BtuCDF involved in vitamin B12 import. Involved in the translocation of the substrate across the membrane.</text>
</comment>
<comment type="subunit">
    <text evidence="1">The complex is composed of two ATP-binding proteins (BtuD), two transmembrane proteins (BtuC) and a solute-binding protein (BtuF).</text>
</comment>
<comment type="subcellular location">
    <subcellularLocation>
        <location evidence="1">Cell inner membrane</location>
        <topology evidence="1">Multi-pass membrane protein</topology>
    </subcellularLocation>
</comment>
<comment type="similarity">
    <text evidence="1">Belongs to the binding-protein-dependent transport system permease family. FecCD subfamily.</text>
</comment>
<sequence length="326" mass="34884">MLTFARQQQRRNVRWLLSLSLLVLLATLLSLCAGEQWIAPGDWLSARGELFVWQIRLPRTLAVLLVGAALALSGAVMQALFENPLAEPGLLGVSNGAGVGLIAAVLLGQGQLPGWALGLCAIAGALIITLILLRFARRHLSTSRLLLAGVALGIICSALMTWAIYFSTSFDLRQLMYWMMGGFGGVDWQQSWLMIALIPVLIWICCQSQPLNMLALGETSARQLGLPLWFWRNLLVVATGWMVGVSVAMAGAIGFIGLVIPHILRLCGLTDHRVLLPGCALAGAIALLLADVVARLALASAELPIGVVTATLGAPVFIWLLLKSAR</sequence>
<dbReference type="EMBL" id="CP001127">
    <property type="protein sequence ID" value="ACF91725.1"/>
    <property type="molecule type" value="Genomic_DNA"/>
</dbReference>
<dbReference type="RefSeq" id="WP_000954984.1">
    <property type="nucleotide sequence ID" value="NC_011094.1"/>
</dbReference>
<dbReference type="SMR" id="B4TUF7"/>
<dbReference type="KEGG" id="sew:SeSA_A1435"/>
<dbReference type="HOGENOM" id="CLU_013016_0_3_6"/>
<dbReference type="Proteomes" id="UP000001865">
    <property type="component" value="Chromosome"/>
</dbReference>
<dbReference type="GO" id="GO:0005886">
    <property type="term" value="C:plasma membrane"/>
    <property type="evidence" value="ECO:0007669"/>
    <property type="project" value="UniProtKB-SubCell"/>
</dbReference>
<dbReference type="GO" id="GO:0090482">
    <property type="term" value="F:vitamin transmembrane transporter activity"/>
    <property type="evidence" value="ECO:0007669"/>
    <property type="project" value="UniProtKB-UniRule"/>
</dbReference>
<dbReference type="GO" id="GO:0015889">
    <property type="term" value="P:cobalamin transport"/>
    <property type="evidence" value="ECO:0007669"/>
    <property type="project" value="UniProtKB-UniRule"/>
</dbReference>
<dbReference type="CDD" id="cd06550">
    <property type="entry name" value="TM_ABC_iron-siderophores_like"/>
    <property type="match status" value="1"/>
</dbReference>
<dbReference type="FunFam" id="1.10.3470.10:FF:000001">
    <property type="entry name" value="Vitamin B12 ABC transporter permease BtuC"/>
    <property type="match status" value="1"/>
</dbReference>
<dbReference type="Gene3D" id="1.10.3470.10">
    <property type="entry name" value="ABC transporter involved in vitamin B12 uptake, BtuC"/>
    <property type="match status" value="1"/>
</dbReference>
<dbReference type="HAMAP" id="MF_01004">
    <property type="entry name" value="BtuC"/>
    <property type="match status" value="1"/>
</dbReference>
<dbReference type="InterPro" id="IPR037294">
    <property type="entry name" value="ABC_BtuC-like"/>
</dbReference>
<dbReference type="InterPro" id="IPR023691">
    <property type="entry name" value="ABC_transptr_BtuC"/>
</dbReference>
<dbReference type="InterPro" id="IPR000522">
    <property type="entry name" value="ABC_transptr_permease_BtuC"/>
</dbReference>
<dbReference type="NCBIfam" id="NF003001">
    <property type="entry name" value="PRK03784.1"/>
    <property type="match status" value="1"/>
</dbReference>
<dbReference type="PANTHER" id="PTHR30472">
    <property type="entry name" value="FERRIC ENTEROBACTIN TRANSPORT SYSTEM PERMEASE PROTEIN"/>
    <property type="match status" value="1"/>
</dbReference>
<dbReference type="PANTHER" id="PTHR30472:SF29">
    <property type="entry name" value="VITAMIN B12 IMPORT SYSTEM PERMEASE PROTEIN BTUC"/>
    <property type="match status" value="1"/>
</dbReference>
<dbReference type="Pfam" id="PF01032">
    <property type="entry name" value="FecCD"/>
    <property type="match status" value="1"/>
</dbReference>
<dbReference type="SUPFAM" id="SSF81345">
    <property type="entry name" value="ABC transporter involved in vitamin B12 uptake, BtuC"/>
    <property type="match status" value="1"/>
</dbReference>
<name>BTUC_SALSV</name>
<feature type="chain" id="PRO_1000201558" description="Vitamin B12 import system permease protein BtuC">
    <location>
        <begin position="1"/>
        <end position="326"/>
    </location>
</feature>
<feature type="transmembrane region" description="Helical" evidence="1">
    <location>
        <begin position="15"/>
        <end position="35"/>
    </location>
</feature>
<feature type="transmembrane region" description="Helical" evidence="1">
    <location>
        <begin position="61"/>
        <end position="81"/>
    </location>
</feature>
<feature type="transmembrane region" description="Helical" evidence="1">
    <location>
        <begin position="88"/>
        <end position="108"/>
    </location>
</feature>
<feature type="transmembrane region" description="Helical" evidence="1">
    <location>
        <begin position="112"/>
        <end position="132"/>
    </location>
</feature>
<feature type="transmembrane region" description="Helical" evidence="1">
    <location>
        <begin position="146"/>
        <end position="166"/>
    </location>
</feature>
<feature type="transmembrane region" description="Helical" evidence="1">
    <location>
        <begin position="184"/>
        <end position="204"/>
    </location>
</feature>
<feature type="transmembrane region" description="Helical" evidence="1">
    <location>
        <begin position="240"/>
        <end position="260"/>
    </location>
</feature>
<feature type="transmembrane region" description="Helical" evidence="1">
    <location>
        <begin position="274"/>
        <end position="294"/>
    </location>
</feature>
<feature type="transmembrane region" description="Helical" evidence="1">
    <location>
        <begin position="302"/>
        <end position="322"/>
    </location>
</feature>
<organism>
    <name type="scientific">Salmonella schwarzengrund (strain CVM19633)</name>
    <dbReference type="NCBI Taxonomy" id="439843"/>
    <lineage>
        <taxon>Bacteria</taxon>
        <taxon>Pseudomonadati</taxon>
        <taxon>Pseudomonadota</taxon>
        <taxon>Gammaproteobacteria</taxon>
        <taxon>Enterobacterales</taxon>
        <taxon>Enterobacteriaceae</taxon>
        <taxon>Salmonella</taxon>
    </lineage>
</organism>
<accession>B4TUF7</accession>